<gene>
    <name type="primary">yozH</name>
    <name type="ordered locus">BSU18860</name>
</gene>
<feature type="chain" id="PRO_0000049670" description="Uncharacterized protein YozH">
    <location>
        <begin position="1"/>
        <end position="118"/>
    </location>
</feature>
<accession>O31837</accession>
<organism>
    <name type="scientific">Bacillus subtilis (strain 168)</name>
    <dbReference type="NCBI Taxonomy" id="224308"/>
    <lineage>
        <taxon>Bacteria</taxon>
        <taxon>Bacillati</taxon>
        <taxon>Bacillota</taxon>
        <taxon>Bacilli</taxon>
        <taxon>Bacillales</taxon>
        <taxon>Bacillaceae</taxon>
        <taxon>Bacillus</taxon>
    </lineage>
</organism>
<sequence>MNDLLFAAGNLHIGLGHDYLKCIALLINVKRFFSLTESYGNISDKLAVVAMKGVQFDQFEEAYKAYKETVAINQNSLVDFLSALITLIKAGEKLQKAGESLAIIMNKLLEMSPENSMK</sequence>
<protein>
    <recommendedName>
        <fullName>Uncharacterized protein YozH</fullName>
    </recommendedName>
</protein>
<proteinExistence type="predicted"/>
<name>YOZH_BACSU</name>
<keyword id="KW-1185">Reference proteome</keyword>
<dbReference type="EMBL" id="AL009126">
    <property type="protein sequence ID" value="CAB13778.2"/>
    <property type="molecule type" value="Genomic_DNA"/>
</dbReference>
<dbReference type="PIR" id="D69931">
    <property type="entry name" value="D69931"/>
</dbReference>
<dbReference type="RefSeq" id="NP_389767.2">
    <property type="nucleotide sequence ID" value="NC_000964.3"/>
</dbReference>
<dbReference type="RefSeq" id="WP_004399488.1">
    <property type="nucleotide sequence ID" value="NZ_OZ025638.1"/>
</dbReference>
<dbReference type="FunCoup" id="O31837">
    <property type="interactions" value="69"/>
</dbReference>
<dbReference type="PaxDb" id="224308-BSU18860"/>
<dbReference type="EnsemblBacteria" id="CAB13778">
    <property type="protein sequence ID" value="CAB13778"/>
    <property type="gene ID" value="BSU_18860"/>
</dbReference>
<dbReference type="GeneID" id="939603"/>
<dbReference type="KEGG" id="bsu:BSU18860"/>
<dbReference type="PATRIC" id="fig|224308.179.peg.2057"/>
<dbReference type="InParanoid" id="O31837"/>
<dbReference type="OrthoDB" id="9866948at2"/>
<dbReference type="BioCyc" id="BSUB:BSU18860-MONOMER"/>
<dbReference type="Proteomes" id="UP000001570">
    <property type="component" value="Chromosome"/>
</dbReference>
<reference key="1">
    <citation type="journal article" date="1997" name="Nature">
        <title>The complete genome sequence of the Gram-positive bacterium Bacillus subtilis.</title>
        <authorList>
            <person name="Kunst F."/>
            <person name="Ogasawara N."/>
            <person name="Moszer I."/>
            <person name="Albertini A.M."/>
            <person name="Alloni G."/>
            <person name="Azevedo V."/>
            <person name="Bertero M.G."/>
            <person name="Bessieres P."/>
            <person name="Bolotin A."/>
            <person name="Borchert S."/>
            <person name="Borriss R."/>
            <person name="Boursier L."/>
            <person name="Brans A."/>
            <person name="Braun M."/>
            <person name="Brignell S.C."/>
            <person name="Bron S."/>
            <person name="Brouillet S."/>
            <person name="Bruschi C.V."/>
            <person name="Caldwell B."/>
            <person name="Capuano V."/>
            <person name="Carter N.M."/>
            <person name="Choi S.-K."/>
            <person name="Codani J.-J."/>
            <person name="Connerton I.F."/>
            <person name="Cummings N.J."/>
            <person name="Daniel R.A."/>
            <person name="Denizot F."/>
            <person name="Devine K.M."/>
            <person name="Duesterhoeft A."/>
            <person name="Ehrlich S.D."/>
            <person name="Emmerson P.T."/>
            <person name="Entian K.-D."/>
            <person name="Errington J."/>
            <person name="Fabret C."/>
            <person name="Ferrari E."/>
            <person name="Foulger D."/>
            <person name="Fritz C."/>
            <person name="Fujita M."/>
            <person name="Fujita Y."/>
            <person name="Fuma S."/>
            <person name="Galizzi A."/>
            <person name="Galleron N."/>
            <person name="Ghim S.-Y."/>
            <person name="Glaser P."/>
            <person name="Goffeau A."/>
            <person name="Golightly E.J."/>
            <person name="Grandi G."/>
            <person name="Guiseppi G."/>
            <person name="Guy B.J."/>
            <person name="Haga K."/>
            <person name="Haiech J."/>
            <person name="Harwood C.R."/>
            <person name="Henaut A."/>
            <person name="Hilbert H."/>
            <person name="Holsappel S."/>
            <person name="Hosono S."/>
            <person name="Hullo M.-F."/>
            <person name="Itaya M."/>
            <person name="Jones L.-M."/>
            <person name="Joris B."/>
            <person name="Karamata D."/>
            <person name="Kasahara Y."/>
            <person name="Klaerr-Blanchard M."/>
            <person name="Klein C."/>
            <person name="Kobayashi Y."/>
            <person name="Koetter P."/>
            <person name="Koningstein G."/>
            <person name="Krogh S."/>
            <person name="Kumano M."/>
            <person name="Kurita K."/>
            <person name="Lapidus A."/>
            <person name="Lardinois S."/>
            <person name="Lauber J."/>
            <person name="Lazarevic V."/>
            <person name="Lee S.-M."/>
            <person name="Levine A."/>
            <person name="Liu H."/>
            <person name="Masuda S."/>
            <person name="Mauel C."/>
            <person name="Medigue C."/>
            <person name="Medina N."/>
            <person name="Mellado R.P."/>
            <person name="Mizuno M."/>
            <person name="Moestl D."/>
            <person name="Nakai S."/>
            <person name="Noback M."/>
            <person name="Noone D."/>
            <person name="O'Reilly M."/>
            <person name="Ogawa K."/>
            <person name="Ogiwara A."/>
            <person name="Oudega B."/>
            <person name="Park S.-H."/>
            <person name="Parro V."/>
            <person name="Pohl T.M."/>
            <person name="Portetelle D."/>
            <person name="Porwollik S."/>
            <person name="Prescott A.M."/>
            <person name="Presecan E."/>
            <person name="Pujic P."/>
            <person name="Purnelle B."/>
            <person name="Rapoport G."/>
            <person name="Rey M."/>
            <person name="Reynolds S."/>
            <person name="Rieger M."/>
            <person name="Rivolta C."/>
            <person name="Rocha E."/>
            <person name="Roche B."/>
            <person name="Rose M."/>
            <person name="Sadaie Y."/>
            <person name="Sato T."/>
            <person name="Scanlan E."/>
            <person name="Schleich S."/>
            <person name="Schroeter R."/>
            <person name="Scoffone F."/>
            <person name="Sekiguchi J."/>
            <person name="Sekowska A."/>
            <person name="Seror S.J."/>
            <person name="Serror P."/>
            <person name="Shin B.-S."/>
            <person name="Soldo B."/>
            <person name="Sorokin A."/>
            <person name="Tacconi E."/>
            <person name="Takagi T."/>
            <person name="Takahashi H."/>
            <person name="Takemaru K."/>
            <person name="Takeuchi M."/>
            <person name="Tamakoshi A."/>
            <person name="Tanaka T."/>
            <person name="Terpstra P."/>
            <person name="Tognoni A."/>
            <person name="Tosato V."/>
            <person name="Uchiyama S."/>
            <person name="Vandenbol M."/>
            <person name="Vannier F."/>
            <person name="Vassarotti A."/>
            <person name="Viari A."/>
            <person name="Wambutt R."/>
            <person name="Wedler E."/>
            <person name="Wedler H."/>
            <person name="Weitzenegger T."/>
            <person name="Winters P."/>
            <person name="Wipat A."/>
            <person name="Yamamoto H."/>
            <person name="Yamane K."/>
            <person name="Yasumoto K."/>
            <person name="Yata K."/>
            <person name="Yoshida K."/>
            <person name="Yoshikawa H.-F."/>
            <person name="Zumstein E."/>
            <person name="Yoshikawa H."/>
            <person name="Danchin A."/>
        </authorList>
    </citation>
    <scope>NUCLEOTIDE SEQUENCE [LARGE SCALE GENOMIC DNA]</scope>
    <source>
        <strain>168</strain>
    </source>
</reference>
<reference key="2">
    <citation type="journal article" date="2009" name="Microbiology">
        <title>From a consortium sequence to a unified sequence: the Bacillus subtilis 168 reference genome a decade later.</title>
        <authorList>
            <person name="Barbe V."/>
            <person name="Cruveiller S."/>
            <person name="Kunst F."/>
            <person name="Lenoble P."/>
            <person name="Meurice G."/>
            <person name="Sekowska A."/>
            <person name="Vallenet D."/>
            <person name="Wang T."/>
            <person name="Moszer I."/>
            <person name="Medigue C."/>
            <person name="Danchin A."/>
        </authorList>
    </citation>
    <scope>SEQUENCE REVISION TO N-TERMINUS</scope>
</reference>